<feature type="chain" id="PRO_0000356987" description="Kynureninase">
    <location>
        <begin position="1"/>
        <end position="428"/>
    </location>
</feature>
<feature type="binding site" evidence="1">
    <location>
        <position position="104"/>
    </location>
    <ligand>
        <name>pyridoxal 5'-phosphate</name>
        <dbReference type="ChEBI" id="CHEBI:597326"/>
    </ligand>
</feature>
<feature type="binding site" evidence="1">
    <location>
        <position position="105"/>
    </location>
    <ligand>
        <name>pyridoxal 5'-phosphate</name>
        <dbReference type="ChEBI" id="CHEBI:597326"/>
    </ligand>
</feature>
<feature type="binding site" evidence="1">
    <location>
        <begin position="132"/>
        <end position="135"/>
    </location>
    <ligand>
        <name>pyridoxal 5'-phosphate</name>
        <dbReference type="ChEBI" id="CHEBI:597326"/>
    </ligand>
</feature>
<feature type="binding site" evidence="1">
    <location>
        <position position="213"/>
    </location>
    <ligand>
        <name>pyridoxal 5'-phosphate</name>
        <dbReference type="ChEBI" id="CHEBI:597326"/>
    </ligand>
</feature>
<feature type="binding site" evidence="1">
    <location>
        <position position="216"/>
    </location>
    <ligand>
        <name>pyridoxal 5'-phosphate</name>
        <dbReference type="ChEBI" id="CHEBI:597326"/>
    </ligand>
</feature>
<feature type="binding site" evidence="1">
    <location>
        <position position="238"/>
    </location>
    <ligand>
        <name>pyridoxal 5'-phosphate</name>
        <dbReference type="ChEBI" id="CHEBI:597326"/>
    </ligand>
</feature>
<feature type="binding site" evidence="1">
    <location>
        <position position="267"/>
    </location>
    <ligand>
        <name>pyridoxal 5'-phosphate</name>
        <dbReference type="ChEBI" id="CHEBI:597326"/>
    </ligand>
</feature>
<feature type="binding site" evidence="1">
    <location>
        <position position="295"/>
    </location>
    <ligand>
        <name>pyridoxal 5'-phosphate</name>
        <dbReference type="ChEBI" id="CHEBI:597326"/>
    </ligand>
</feature>
<feature type="modified residue" description="N6-(pyridoxal phosphate)lysine" evidence="1">
    <location>
        <position position="239"/>
    </location>
</feature>
<evidence type="ECO:0000255" key="1">
    <source>
        <dbReference type="HAMAP-Rule" id="MF_01970"/>
    </source>
</evidence>
<gene>
    <name evidence="1" type="primary">kynU</name>
    <name type="ordered locus">BA_2753</name>
    <name type="ordered locus">GBAA_2753</name>
    <name type="ordered locus">BAS2567</name>
</gene>
<keyword id="KW-0378">Hydrolase</keyword>
<keyword id="KW-0662">Pyridine nucleotide biosynthesis</keyword>
<keyword id="KW-0663">Pyridoxal phosphate</keyword>
<keyword id="KW-1185">Reference proteome</keyword>
<dbReference type="EC" id="3.7.1.3" evidence="1"/>
<dbReference type="EMBL" id="AE016879">
    <property type="protein sequence ID" value="AAP26589.1"/>
    <property type="molecule type" value="Genomic_DNA"/>
</dbReference>
<dbReference type="EMBL" id="AE017334">
    <property type="protein sequence ID" value="AAT31869.1"/>
    <property type="molecule type" value="Genomic_DNA"/>
</dbReference>
<dbReference type="EMBL" id="AE017225">
    <property type="protein sequence ID" value="AAT54877.1"/>
    <property type="molecule type" value="Genomic_DNA"/>
</dbReference>
<dbReference type="RefSeq" id="NP_845103.1">
    <property type="nucleotide sequence ID" value="NC_003997.3"/>
</dbReference>
<dbReference type="RefSeq" id="WP_000276288.1">
    <property type="nucleotide sequence ID" value="NZ_WXXJ01000026.1"/>
</dbReference>
<dbReference type="RefSeq" id="YP_028826.1">
    <property type="nucleotide sequence ID" value="NC_005945.1"/>
</dbReference>
<dbReference type="SMR" id="Q81PP8"/>
<dbReference type="STRING" id="261594.GBAA_2753"/>
<dbReference type="DNASU" id="1088380"/>
<dbReference type="GeneID" id="45022595"/>
<dbReference type="KEGG" id="ban:BA_2753"/>
<dbReference type="KEGG" id="banh:HYU01_13655"/>
<dbReference type="KEGG" id="bar:GBAA_2753"/>
<dbReference type="KEGG" id="bat:BAS2567"/>
<dbReference type="PATRIC" id="fig|198094.11.peg.2737"/>
<dbReference type="eggNOG" id="COG3844">
    <property type="taxonomic scope" value="Bacteria"/>
</dbReference>
<dbReference type="HOGENOM" id="CLU_003433_4_0_9"/>
<dbReference type="OMA" id="LPGWNSH"/>
<dbReference type="OrthoDB" id="9812626at2"/>
<dbReference type="UniPathway" id="UPA00253">
    <property type="reaction ID" value="UER00329"/>
</dbReference>
<dbReference type="UniPathway" id="UPA00334">
    <property type="reaction ID" value="UER00455"/>
</dbReference>
<dbReference type="Proteomes" id="UP000000427">
    <property type="component" value="Chromosome"/>
</dbReference>
<dbReference type="Proteomes" id="UP000000594">
    <property type="component" value="Chromosome"/>
</dbReference>
<dbReference type="GO" id="GO:0005737">
    <property type="term" value="C:cytoplasm"/>
    <property type="evidence" value="ECO:0007669"/>
    <property type="project" value="InterPro"/>
</dbReference>
<dbReference type="GO" id="GO:0030429">
    <property type="term" value="F:kynureninase activity"/>
    <property type="evidence" value="ECO:0007669"/>
    <property type="project" value="UniProtKB-UniRule"/>
</dbReference>
<dbReference type="GO" id="GO:0030170">
    <property type="term" value="F:pyridoxal phosphate binding"/>
    <property type="evidence" value="ECO:0007669"/>
    <property type="project" value="UniProtKB-UniRule"/>
</dbReference>
<dbReference type="GO" id="GO:0043420">
    <property type="term" value="P:anthranilate metabolic process"/>
    <property type="evidence" value="ECO:0007669"/>
    <property type="project" value="TreeGrafter"/>
</dbReference>
<dbReference type="GO" id="GO:0097053">
    <property type="term" value="P:L-kynurenine catabolic process"/>
    <property type="evidence" value="ECO:0007669"/>
    <property type="project" value="UniProtKB-UniRule"/>
</dbReference>
<dbReference type="GO" id="GO:0019441">
    <property type="term" value="P:L-tryptophan catabolic process to kynurenine"/>
    <property type="evidence" value="ECO:0007669"/>
    <property type="project" value="TreeGrafter"/>
</dbReference>
<dbReference type="GO" id="GO:0009435">
    <property type="term" value="P:NAD biosynthetic process"/>
    <property type="evidence" value="ECO:0007669"/>
    <property type="project" value="UniProtKB-UniPathway"/>
</dbReference>
<dbReference type="GO" id="GO:0019805">
    <property type="term" value="P:quinolinate biosynthetic process"/>
    <property type="evidence" value="ECO:0007669"/>
    <property type="project" value="UniProtKB-UniRule"/>
</dbReference>
<dbReference type="FunFam" id="3.40.640.10:FF:000031">
    <property type="entry name" value="Kynureninase"/>
    <property type="match status" value="1"/>
</dbReference>
<dbReference type="Gene3D" id="3.90.1150.10">
    <property type="entry name" value="Aspartate Aminotransferase, domain 1"/>
    <property type="match status" value="1"/>
</dbReference>
<dbReference type="Gene3D" id="3.40.640.10">
    <property type="entry name" value="Type I PLP-dependent aspartate aminotransferase-like (Major domain)"/>
    <property type="match status" value="1"/>
</dbReference>
<dbReference type="HAMAP" id="MF_01970">
    <property type="entry name" value="Kynureninase"/>
    <property type="match status" value="1"/>
</dbReference>
<dbReference type="InterPro" id="IPR010111">
    <property type="entry name" value="Kynureninase"/>
</dbReference>
<dbReference type="InterPro" id="IPR015424">
    <property type="entry name" value="PyrdxlP-dep_Trfase"/>
</dbReference>
<dbReference type="InterPro" id="IPR015421">
    <property type="entry name" value="PyrdxlP-dep_Trfase_major"/>
</dbReference>
<dbReference type="InterPro" id="IPR015422">
    <property type="entry name" value="PyrdxlP-dep_Trfase_small"/>
</dbReference>
<dbReference type="NCBIfam" id="TIGR01814">
    <property type="entry name" value="kynureninase"/>
    <property type="match status" value="1"/>
</dbReference>
<dbReference type="PANTHER" id="PTHR14084">
    <property type="entry name" value="KYNURENINASE"/>
    <property type="match status" value="1"/>
</dbReference>
<dbReference type="PANTHER" id="PTHR14084:SF0">
    <property type="entry name" value="KYNURENINASE"/>
    <property type="match status" value="1"/>
</dbReference>
<dbReference type="Pfam" id="PF22580">
    <property type="entry name" value="KYNU_C"/>
    <property type="match status" value="1"/>
</dbReference>
<dbReference type="PIRSF" id="PIRSF038800">
    <property type="entry name" value="KYNU"/>
    <property type="match status" value="1"/>
</dbReference>
<dbReference type="SUPFAM" id="SSF53383">
    <property type="entry name" value="PLP-dependent transferases"/>
    <property type="match status" value="1"/>
</dbReference>
<protein>
    <recommendedName>
        <fullName evidence="1">Kynureninase</fullName>
        <ecNumber evidence="1">3.7.1.3</ecNumber>
    </recommendedName>
    <alternativeName>
        <fullName evidence="1">L-kynurenine hydrolase</fullName>
    </alternativeName>
</protein>
<proteinExistence type="inferred from homology"/>
<accession>Q81PP8</accession>
<accession>Q6HXW2</accession>
<accession>Q6KRY4</accession>
<comment type="function">
    <text evidence="1">Catalyzes the cleavage of L-kynurenine (L-Kyn) and L-3-hydroxykynurenine (L-3OHKyn) into anthranilic acid (AA) and 3-hydroxyanthranilic acid (3-OHAA), respectively.</text>
</comment>
<comment type="catalytic activity">
    <reaction evidence="1">
        <text>L-kynurenine + H2O = anthranilate + L-alanine + H(+)</text>
        <dbReference type="Rhea" id="RHEA:16813"/>
        <dbReference type="ChEBI" id="CHEBI:15377"/>
        <dbReference type="ChEBI" id="CHEBI:15378"/>
        <dbReference type="ChEBI" id="CHEBI:16567"/>
        <dbReference type="ChEBI" id="CHEBI:57959"/>
        <dbReference type="ChEBI" id="CHEBI:57972"/>
        <dbReference type="EC" id="3.7.1.3"/>
    </reaction>
</comment>
<comment type="catalytic activity">
    <reaction evidence="1">
        <text>3-hydroxy-L-kynurenine + H2O = 3-hydroxyanthranilate + L-alanine + H(+)</text>
        <dbReference type="Rhea" id="RHEA:25143"/>
        <dbReference type="ChEBI" id="CHEBI:15377"/>
        <dbReference type="ChEBI" id="CHEBI:15378"/>
        <dbReference type="ChEBI" id="CHEBI:36559"/>
        <dbReference type="ChEBI" id="CHEBI:57972"/>
        <dbReference type="ChEBI" id="CHEBI:58125"/>
        <dbReference type="EC" id="3.7.1.3"/>
    </reaction>
</comment>
<comment type="cofactor">
    <cofactor evidence="1">
        <name>pyridoxal 5'-phosphate</name>
        <dbReference type="ChEBI" id="CHEBI:597326"/>
    </cofactor>
</comment>
<comment type="pathway">
    <text evidence="1">Amino-acid degradation; L-kynurenine degradation; L-alanine and anthranilate from L-kynurenine: step 1/1.</text>
</comment>
<comment type="pathway">
    <text evidence="1">Cofactor biosynthesis; NAD(+) biosynthesis; quinolinate from L-kynurenine: step 2/3.</text>
</comment>
<comment type="subunit">
    <text evidence="1">Homodimer.</text>
</comment>
<comment type="similarity">
    <text evidence="1">Belongs to the kynureninase family.</text>
</comment>
<organism>
    <name type="scientific">Bacillus anthracis</name>
    <dbReference type="NCBI Taxonomy" id="1392"/>
    <lineage>
        <taxon>Bacteria</taxon>
        <taxon>Bacillati</taxon>
        <taxon>Bacillota</taxon>
        <taxon>Bacilli</taxon>
        <taxon>Bacillales</taxon>
        <taxon>Bacillaceae</taxon>
        <taxon>Bacillus</taxon>
        <taxon>Bacillus cereus group</taxon>
    </lineage>
</organism>
<reference key="1">
    <citation type="journal article" date="2003" name="Nature">
        <title>The genome sequence of Bacillus anthracis Ames and comparison to closely related bacteria.</title>
        <authorList>
            <person name="Read T.D."/>
            <person name="Peterson S.N."/>
            <person name="Tourasse N.J."/>
            <person name="Baillie L.W."/>
            <person name="Paulsen I.T."/>
            <person name="Nelson K.E."/>
            <person name="Tettelin H."/>
            <person name="Fouts D.E."/>
            <person name="Eisen J.A."/>
            <person name="Gill S.R."/>
            <person name="Holtzapple E.K."/>
            <person name="Okstad O.A."/>
            <person name="Helgason E."/>
            <person name="Rilstone J."/>
            <person name="Wu M."/>
            <person name="Kolonay J.F."/>
            <person name="Beanan M.J."/>
            <person name="Dodson R.J."/>
            <person name="Brinkac L.M."/>
            <person name="Gwinn M.L."/>
            <person name="DeBoy R.T."/>
            <person name="Madpu R."/>
            <person name="Daugherty S.C."/>
            <person name="Durkin A.S."/>
            <person name="Haft D.H."/>
            <person name="Nelson W.C."/>
            <person name="Peterson J.D."/>
            <person name="Pop M."/>
            <person name="Khouri H.M."/>
            <person name="Radune D."/>
            <person name="Benton J.L."/>
            <person name="Mahamoud Y."/>
            <person name="Jiang L."/>
            <person name="Hance I.R."/>
            <person name="Weidman J.F."/>
            <person name="Berry K.J."/>
            <person name="Plaut R.D."/>
            <person name="Wolf A.M."/>
            <person name="Watkins K.L."/>
            <person name="Nierman W.C."/>
            <person name="Hazen A."/>
            <person name="Cline R.T."/>
            <person name="Redmond C."/>
            <person name="Thwaite J.E."/>
            <person name="White O."/>
            <person name="Salzberg S.L."/>
            <person name="Thomason B."/>
            <person name="Friedlander A.M."/>
            <person name="Koehler T.M."/>
            <person name="Hanna P.C."/>
            <person name="Kolstoe A.-B."/>
            <person name="Fraser C.M."/>
        </authorList>
    </citation>
    <scope>NUCLEOTIDE SEQUENCE [LARGE SCALE GENOMIC DNA]</scope>
    <source>
        <strain>Ames / isolate Porton</strain>
    </source>
</reference>
<reference key="2">
    <citation type="journal article" date="2009" name="J. Bacteriol.">
        <title>The complete genome sequence of Bacillus anthracis Ames 'Ancestor'.</title>
        <authorList>
            <person name="Ravel J."/>
            <person name="Jiang L."/>
            <person name="Stanley S.T."/>
            <person name="Wilson M.R."/>
            <person name="Decker R.S."/>
            <person name="Read T.D."/>
            <person name="Worsham P."/>
            <person name="Keim P.S."/>
            <person name="Salzberg S.L."/>
            <person name="Fraser-Liggett C.M."/>
            <person name="Rasko D.A."/>
        </authorList>
    </citation>
    <scope>NUCLEOTIDE SEQUENCE [LARGE SCALE GENOMIC DNA]</scope>
    <source>
        <strain>Ames ancestor</strain>
    </source>
</reference>
<reference key="3">
    <citation type="submission" date="2004-01" db="EMBL/GenBank/DDBJ databases">
        <title>Complete genome sequence of Bacillus anthracis Sterne.</title>
        <authorList>
            <person name="Brettin T.S."/>
            <person name="Bruce D."/>
            <person name="Challacombe J.F."/>
            <person name="Gilna P."/>
            <person name="Han C."/>
            <person name="Hill K."/>
            <person name="Hitchcock P."/>
            <person name="Jackson P."/>
            <person name="Keim P."/>
            <person name="Longmire J."/>
            <person name="Lucas S."/>
            <person name="Okinaka R."/>
            <person name="Richardson P."/>
            <person name="Rubin E."/>
            <person name="Tice H."/>
        </authorList>
    </citation>
    <scope>NUCLEOTIDE SEQUENCE [LARGE SCALE GENOMIC DNA]</scope>
    <source>
        <strain>Sterne</strain>
    </source>
</reference>
<name>KYNU_BACAN</name>
<sequence>MYKEPFQPTYEYALECDKHDELKDFQTEFYKKEGTIYLDGNSLGLLSKRAEKSLLTLLDSWKEYGIDGWTEGEHPWFFLSEKLGELTAPLIGALPEETIVTGSTTTNIHQVIATFYEPKGIRTKILADELTFPSDIYALQSQIRLKGLDPDEHLVRVKSRDGRTLSEDDIIQAMTDDIALILLPSVLYRSGQILDMKRLTAEAHERGIHIGFDLCHSIGSIPHHFKEWDVDFAIWCNYKYLNAGPGGVAGLYVNKKHFNRLPGLSGWFSSRKDKQFDMEHTLTAADHAGAYQIGTPHVLSTAPLIGSLEIFKEAGIERLREKSLHITRFMLNLIAHELSDFGFTIGNPLEDEKRGGHIYLEHAEAARICKALKANGVIPDFRAPNGVRLAPVALYNTYEEVWQSVMILKKIMKDEEYKQFENKREVVA</sequence>